<organism>
    <name type="scientific">Micrococcus luteus (strain ATCC 4698 / DSM 20030 / JCM 1464 / CCM 169 / CCUG 5858 / IAM 1056 / NBRC 3333 / NCIMB 9278 / NCTC 2665 / VKM Ac-2230)</name>
    <name type="common">Micrococcus lysodeikticus</name>
    <dbReference type="NCBI Taxonomy" id="465515"/>
    <lineage>
        <taxon>Bacteria</taxon>
        <taxon>Bacillati</taxon>
        <taxon>Actinomycetota</taxon>
        <taxon>Actinomycetes</taxon>
        <taxon>Micrococcales</taxon>
        <taxon>Micrococcaceae</taxon>
        <taxon>Micrococcus</taxon>
    </lineage>
</organism>
<sequence>MSISPPDDLVASVTFDDRGLVPAIAQQEGTGEVLMMAWMNAESLRATLETGWATYWSRSRGELWRKGETSGHLQRVRAVHADCDGDTLLLTVDQTGPACHTGTRTCFTGRELVMPPAAVDPEEAAR</sequence>
<dbReference type="EC" id="3.5.4.19" evidence="1"/>
<dbReference type="EMBL" id="CP001628">
    <property type="protein sequence ID" value="ACS30599.1"/>
    <property type="molecule type" value="Genomic_DNA"/>
</dbReference>
<dbReference type="RefSeq" id="WP_010078764.1">
    <property type="nucleotide sequence ID" value="NC_012803.1"/>
</dbReference>
<dbReference type="SMR" id="C5CBK2"/>
<dbReference type="STRING" id="465515.Mlut_10920"/>
<dbReference type="EnsemblBacteria" id="ACS30599">
    <property type="protein sequence ID" value="ACS30599"/>
    <property type="gene ID" value="Mlut_10920"/>
</dbReference>
<dbReference type="GeneID" id="93345249"/>
<dbReference type="KEGG" id="mlu:Mlut_10920"/>
<dbReference type="eggNOG" id="COG0139">
    <property type="taxonomic scope" value="Bacteria"/>
</dbReference>
<dbReference type="HOGENOM" id="CLU_048577_5_1_11"/>
<dbReference type="UniPathway" id="UPA00031">
    <property type="reaction ID" value="UER00008"/>
</dbReference>
<dbReference type="Proteomes" id="UP000000738">
    <property type="component" value="Chromosome"/>
</dbReference>
<dbReference type="GO" id="GO:0005737">
    <property type="term" value="C:cytoplasm"/>
    <property type="evidence" value="ECO:0007669"/>
    <property type="project" value="UniProtKB-SubCell"/>
</dbReference>
<dbReference type="GO" id="GO:0000287">
    <property type="term" value="F:magnesium ion binding"/>
    <property type="evidence" value="ECO:0007669"/>
    <property type="project" value="UniProtKB-UniRule"/>
</dbReference>
<dbReference type="GO" id="GO:0004635">
    <property type="term" value="F:phosphoribosyl-AMP cyclohydrolase activity"/>
    <property type="evidence" value="ECO:0007669"/>
    <property type="project" value="UniProtKB-UniRule"/>
</dbReference>
<dbReference type="GO" id="GO:0008270">
    <property type="term" value="F:zinc ion binding"/>
    <property type="evidence" value="ECO:0007669"/>
    <property type="project" value="UniProtKB-UniRule"/>
</dbReference>
<dbReference type="GO" id="GO:0000105">
    <property type="term" value="P:L-histidine biosynthetic process"/>
    <property type="evidence" value="ECO:0007669"/>
    <property type="project" value="UniProtKB-UniRule"/>
</dbReference>
<dbReference type="FunFam" id="3.10.20.810:FF:000001">
    <property type="entry name" value="Histidine biosynthesis bifunctional protein HisIE"/>
    <property type="match status" value="1"/>
</dbReference>
<dbReference type="Gene3D" id="3.10.20.810">
    <property type="entry name" value="Phosphoribosyl-AMP cyclohydrolase"/>
    <property type="match status" value="1"/>
</dbReference>
<dbReference type="HAMAP" id="MF_01021">
    <property type="entry name" value="HisI"/>
    <property type="match status" value="1"/>
</dbReference>
<dbReference type="InterPro" id="IPR026660">
    <property type="entry name" value="PRA-CH"/>
</dbReference>
<dbReference type="InterPro" id="IPR002496">
    <property type="entry name" value="PRib_AMP_CycHydrolase_dom"/>
</dbReference>
<dbReference type="InterPro" id="IPR038019">
    <property type="entry name" value="PRib_AMP_CycHydrolase_sf"/>
</dbReference>
<dbReference type="NCBIfam" id="NF000768">
    <property type="entry name" value="PRK00051.1"/>
    <property type="match status" value="1"/>
</dbReference>
<dbReference type="PANTHER" id="PTHR42945">
    <property type="entry name" value="HISTIDINE BIOSYNTHESIS BIFUNCTIONAL PROTEIN"/>
    <property type="match status" value="1"/>
</dbReference>
<dbReference type="PANTHER" id="PTHR42945:SF1">
    <property type="entry name" value="HISTIDINE BIOSYNTHESIS BIFUNCTIONAL PROTEIN HIS7"/>
    <property type="match status" value="1"/>
</dbReference>
<dbReference type="Pfam" id="PF01502">
    <property type="entry name" value="PRA-CH"/>
    <property type="match status" value="1"/>
</dbReference>
<dbReference type="SUPFAM" id="SSF141734">
    <property type="entry name" value="HisI-like"/>
    <property type="match status" value="1"/>
</dbReference>
<proteinExistence type="inferred from homology"/>
<evidence type="ECO:0000255" key="1">
    <source>
        <dbReference type="HAMAP-Rule" id="MF_01021"/>
    </source>
</evidence>
<gene>
    <name evidence="1" type="primary">hisI</name>
    <name type="ordered locus">Mlut_10920</name>
</gene>
<comment type="function">
    <text evidence="1">Catalyzes the hydrolysis of the adenine ring of phosphoribosyl-AMP.</text>
</comment>
<comment type="catalytic activity">
    <reaction evidence="1">
        <text>1-(5-phospho-beta-D-ribosyl)-5'-AMP + H2O = 1-(5-phospho-beta-D-ribosyl)-5-[(5-phospho-beta-D-ribosylamino)methylideneamino]imidazole-4-carboxamide</text>
        <dbReference type="Rhea" id="RHEA:20049"/>
        <dbReference type="ChEBI" id="CHEBI:15377"/>
        <dbReference type="ChEBI" id="CHEBI:58435"/>
        <dbReference type="ChEBI" id="CHEBI:59457"/>
        <dbReference type="EC" id="3.5.4.19"/>
    </reaction>
</comment>
<comment type="cofactor">
    <cofactor evidence="1">
        <name>Mg(2+)</name>
        <dbReference type="ChEBI" id="CHEBI:18420"/>
    </cofactor>
    <text evidence="1">Binds 1 Mg(2+) ion per subunit.</text>
</comment>
<comment type="cofactor">
    <cofactor evidence="1">
        <name>Zn(2+)</name>
        <dbReference type="ChEBI" id="CHEBI:29105"/>
    </cofactor>
    <text evidence="1">Binds 1 zinc ion per subunit.</text>
</comment>
<comment type="pathway">
    <text evidence="1">Amino-acid biosynthesis; L-histidine biosynthesis; L-histidine from 5-phospho-alpha-D-ribose 1-diphosphate: step 3/9.</text>
</comment>
<comment type="subunit">
    <text evidence="1">Homodimer.</text>
</comment>
<comment type="subcellular location">
    <subcellularLocation>
        <location evidence="1">Cytoplasm</location>
    </subcellularLocation>
</comment>
<comment type="similarity">
    <text evidence="1">Belongs to the PRA-CH family.</text>
</comment>
<feature type="chain" id="PRO_1000213303" description="Phosphoribosyl-AMP cyclohydrolase">
    <location>
        <begin position="1"/>
        <end position="126"/>
    </location>
</feature>
<feature type="binding site" evidence="1">
    <location>
        <position position="82"/>
    </location>
    <ligand>
        <name>Mg(2+)</name>
        <dbReference type="ChEBI" id="CHEBI:18420"/>
    </ligand>
</feature>
<feature type="binding site" evidence="1">
    <location>
        <position position="83"/>
    </location>
    <ligand>
        <name>Zn(2+)</name>
        <dbReference type="ChEBI" id="CHEBI:29105"/>
        <note>ligand shared between dimeric partners</note>
    </ligand>
</feature>
<feature type="binding site" evidence="1">
    <location>
        <position position="84"/>
    </location>
    <ligand>
        <name>Mg(2+)</name>
        <dbReference type="ChEBI" id="CHEBI:18420"/>
    </ligand>
</feature>
<feature type="binding site" evidence="1">
    <location>
        <position position="86"/>
    </location>
    <ligand>
        <name>Mg(2+)</name>
        <dbReference type="ChEBI" id="CHEBI:18420"/>
    </ligand>
</feature>
<feature type="binding site" evidence="1">
    <location>
        <position position="99"/>
    </location>
    <ligand>
        <name>Zn(2+)</name>
        <dbReference type="ChEBI" id="CHEBI:29105"/>
        <note>ligand shared between dimeric partners</note>
    </ligand>
</feature>
<feature type="binding site" evidence="1">
    <location>
        <position position="106"/>
    </location>
    <ligand>
        <name>Zn(2+)</name>
        <dbReference type="ChEBI" id="CHEBI:29105"/>
        <note>ligand shared between dimeric partners</note>
    </ligand>
</feature>
<accession>C5CBK2</accession>
<reference key="1">
    <citation type="journal article" date="2010" name="J. Bacteriol.">
        <title>Genome sequence of the Fleming strain of Micrococcus luteus, a simple free-living actinobacterium.</title>
        <authorList>
            <person name="Young M."/>
            <person name="Artsatbanov V."/>
            <person name="Beller H.R."/>
            <person name="Chandra G."/>
            <person name="Chater K.F."/>
            <person name="Dover L.G."/>
            <person name="Goh E.B."/>
            <person name="Kahan T."/>
            <person name="Kaprelyants A.S."/>
            <person name="Kyrpides N."/>
            <person name="Lapidus A."/>
            <person name="Lowry S.R."/>
            <person name="Lykidis A."/>
            <person name="Mahillon J."/>
            <person name="Markowitz V."/>
            <person name="Mavromatis K."/>
            <person name="Mukamolova G.V."/>
            <person name="Oren A."/>
            <person name="Rokem J.S."/>
            <person name="Smith M.C."/>
            <person name="Young D.I."/>
            <person name="Greenblatt C.L."/>
        </authorList>
    </citation>
    <scope>NUCLEOTIDE SEQUENCE [LARGE SCALE GENOMIC DNA]</scope>
    <source>
        <strain>ATCC 4698 / DSM 20030 / JCM 1464 / CCM 169 / CCUG 5858 / IAM 1056 / NBRC 3333 / NCIMB 9278 / NCTC 2665 / VKM Ac-2230</strain>
    </source>
</reference>
<protein>
    <recommendedName>
        <fullName evidence="1">Phosphoribosyl-AMP cyclohydrolase</fullName>
        <shortName evidence="1">PRA-CH</shortName>
        <ecNumber evidence="1">3.5.4.19</ecNumber>
    </recommendedName>
</protein>
<name>HIS3_MICLC</name>
<keyword id="KW-0028">Amino-acid biosynthesis</keyword>
<keyword id="KW-0963">Cytoplasm</keyword>
<keyword id="KW-0368">Histidine biosynthesis</keyword>
<keyword id="KW-0378">Hydrolase</keyword>
<keyword id="KW-0460">Magnesium</keyword>
<keyword id="KW-0479">Metal-binding</keyword>
<keyword id="KW-1185">Reference proteome</keyword>
<keyword id="KW-0862">Zinc</keyword>